<gene>
    <name evidence="1" type="primary">rpmB</name>
    <name type="ordered locus">Plut_1606</name>
</gene>
<accession>Q3B2H1</accession>
<feature type="chain" id="PRO_1000007298" description="Large ribosomal subunit protein bL28">
    <location>
        <begin position="1"/>
        <end position="72"/>
    </location>
</feature>
<evidence type="ECO:0000255" key="1">
    <source>
        <dbReference type="HAMAP-Rule" id="MF_00373"/>
    </source>
</evidence>
<evidence type="ECO:0000305" key="2"/>
<sequence>MSKVCVLTGKRPKYGNTVSHANNHRRTRFEPNLHTKRIWIDEEKRWAKVKLSAKAMKIIAKTGTAELAKLLK</sequence>
<comment type="similarity">
    <text evidence="1">Belongs to the bacterial ribosomal protein bL28 family.</text>
</comment>
<organism>
    <name type="scientific">Chlorobium luteolum (strain DSM 273 / BCRC 81028 / 2530)</name>
    <name type="common">Pelodictyon luteolum</name>
    <dbReference type="NCBI Taxonomy" id="319225"/>
    <lineage>
        <taxon>Bacteria</taxon>
        <taxon>Pseudomonadati</taxon>
        <taxon>Chlorobiota</taxon>
        <taxon>Chlorobiia</taxon>
        <taxon>Chlorobiales</taxon>
        <taxon>Chlorobiaceae</taxon>
        <taxon>Chlorobium/Pelodictyon group</taxon>
        <taxon>Pelodictyon</taxon>
    </lineage>
</organism>
<proteinExistence type="inferred from homology"/>
<reference key="1">
    <citation type="submission" date="2005-08" db="EMBL/GenBank/DDBJ databases">
        <title>Complete sequence of Pelodictyon luteolum DSM 273.</title>
        <authorList>
            <consortium name="US DOE Joint Genome Institute"/>
            <person name="Copeland A."/>
            <person name="Lucas S."/>
            <person name="Lapidus A."/>
            <person name="Barry K."/>
            <person name="Detter J.C."/>
            <person name="Glavina T."/>
            <person name="Hammon N."/>
            <person name="Israni S."/>
            <person name="Pitluck S."/>
            <person name="Bryant D."/>
            <person name="Schmutz J."/>
            <person name="Larimer F."/>
            <person name="Land M."/>
            <person name="Kyrpides N."/>
            <person name="Ivanova N."/>
            <person name="Richardson P."/>
        </authorList>
    </citation>
    <scope>NUCLEOTIDE SEQUENCE [LARGE SCALE GENOMIC DNA]</scope>
    <source>
        <strain>DSM 273 / BCRC 81028 / 2530</strain>
    </source>
</reference>
<protein>
    <recommendedName>
        <fullName evidence="1">Large ribosomal subunit protein bL28</fullName>
    </recommendedName>
    <alternativeName>
        <fullName evidence="2">50S ribosomal protein L28</fullName>
    </alternativeName>
</protein>
<dbReference type="EMBL" id="CP000096">
    <property type="protein sequence ID" value="ABB24460.1"/>
    <property type="molecule type" value="Genomic_DNA"/>
</dbReference>
<dbReference type="RefSeq" id="WP_011358332.1">
    <property type="nucleotide sequence ID" value="NC_007512.1"/>
</dbReference>
<dbReference type="SMR" id="Q3B2H1"/>
<dbReference type="STRING" id="319225.Plut_1606"/>
<dbReference type="KEGG" id="plt:Plut_1606"/>
<dbReference type="eggNOG" id="COG0227">
    <property type="taxonomic scope" value="Bacteria"/>
</dbReference>
<dbReference type="HOGENOM" id="CLU_064548_3_1_10"/>
<dbReference type="OrthoDB" id="9805609at2"/>
<dbReference type="Proteomes" id="UP000002709">
    <property type="component" value="Chromosome"/>
</dbReference>
<dbReference type="GO" id="GO:1990904">
    <property type="term" value="C:ribonucleoprotein complex"/>
    <property type="evidence" value="ECO:0007669"/>
    <property type="project" value="UniProtKB-KW"/>
</dbReference>
<dbReference type="GO" id="GO:0005840">
    <property type="term" value="C:ribosome"/>
    <property type="evidence" value="ECO:0007669"/>
    <property type="project" value="UniProtKB-KW"/>
</dbReference>
<dbReference type="GO" id="GO:0003735">
    <property type="term" value="F:structural constituent of ribosome"/>
    <property type="evidence" value="ECO:0007669"/>
    <property type="project" value="InterPro"/>
</dbReference>
<dbReference type="GO" id="GO:0006412">
    <property type="term" value="P:translation"/>
    <property type="evidence" value="ECO:0007669"/>
    <property type="project" value="UniProtKB-UniRule"/>
</dbReference>
<dbReference type="Gene3D" id="2.30.170.40">
    <property type="entry name" value="Ribosomal protein L28/L24"/>
    <property type="match status" value="1"/>
</dbReference>
<dbReference type="HAMAP" id="MF_00373">
    <property type="entry name" value="Ribosomal_bL28"/>
    <property type="match status" value="1"/>
</dbReference>
<dbReference type="InterPro" id="IPR050096">
    <property type="entry name" value="Bacterial_rp_bL28"/>
</dbReference>
<dbReference type="InterPro" id="IPR026569">
    <property type="entry name" value="Ribosomal_bL28"/>
</dbReference>
<dbReference type="InterPro" id="IPR034704">
    <property type="entry name" value="Ribosomal_bL28/bL31-like_sf"/>
</dbReference>
<dbReference type="InterPro" id="IPR001383">
    <property type="entry name" value="Ribosomal_bL28_bact-type"/>
</dbReference>
<dbReference type="InterPro" id="IPR037147">
    <property type="entry name" value="Ribosomal_bL28_sf"/>
</dbReference>
<dbReference type="NCBIfam" id="TIGR00009">
    <property type="entry name" value="L28"/>
    <property type="match status" value="1"/>
</dbReference>
<dbReference type="PANTHER" id="PTHR39080">
    <property type="entry name" value="50S RIBOSOMAL PROTEIN L28"/>
    <property type="match status" value="1"/>
</dbReference>
<dbReference type="PANTHER" id="PTHR39080:SF1">
    <property type="entry name" value="LARGE RIBOSOMAL SUBUNIT PROTEIN BL28A"/>
    <property type="match status" value="1"/>
</dbReference>
<dbReference type="Pfam" id="PF00830">
    <property type="entry name" value="Ribosomal_L28"/>
    <property type="match status" value="1"/>
</dbReference>
<dbReference type="SUPFAM" id="SSF143800">
    <property type="entry name" value="L28p-like"/>
    <property type="match status" value="1"/>
</dbReference>
<keyword id="KW-1185">Reference proteome</keyword>
<keyword id="KW-0687">Ribonucleoprotein</keyword>
<keyword id="KW-0689">Ribosomal protein</keyword>
<name>RL28_CHLL3</name>